<feature type="chain" id="PRO_0000198891" description="Ras-related protein ced-10">
    <location>
        <begin position="1"/>
        <end position="188"/>
    </location>
</feature>
<feature type="propeptide" id="PRO_0000281242" description="Removed in mature form" evidence="1">
    <location>
        <begin position="189"/>
        <end position="191"/>
    </location>
</feature>
<feature type="short sequence motif" description="Effector region" evidence="2">
    <location>
        <begin position="32"/>
        <end position="40"/>
    </location>
</feature>
<feature type="binding site" evidence="1">
    <location>
        <begin position="10"/>
        <end position="17"/>
    </location>
    <ligand>
        <name>GTP</name>
        <dbReference type="ChEBI" id="CHEBI:37565"/>
    </ligand>
</feature>
<feature type="binding site" evidence="1">
    <location>
        <begin position="57"/>
        <end position="61"/>
    </location>
    <ligand>
        <name>GTP</name>
        <dbReference type="ChEBI" id="CHEBI:37565"/>
    </ligand>
</feature>
<feature type="binding site" evidence="1">
    <location>
        <begin position="115"/>
        <end position="118"/>
    </location>
    <ligand>
        <name>GTP</name>
        <dbReference type="ChEBI" id="CHEBI:37565"/>
    </ligand>
</feature>
<feature type="modified residue" description="Cysteine methyl ester" evidence="1">
    <location>
        <position position="188"/>
    </location>
</feature>
<feature type="lipid moiety-binding region" description="S-geranylgeranyl cysteine" evidence="1">
    <location>
        <position position="188"/>
    </location>
</feature>
<feature type="splice variant" id="VSP_005711" description="In isoform a." evidence="18">
    <location>
        <begin position="69"/>
        <end position="130"/>
    </location>
</feature>
<feature type="mutagenesis site" description="May be constitutively active. Enhances interaction with chdp-1 protein compared to N-17 mutant. Formation of ectopic processes often branched in PDE neurons." evidence="5 12">
    <original>G</original>
    <variation>V</variation>
    <location>
        <position position="12"/>
    </location>
</feature>
<feature type="mutagenesis site" description="May be mimicking the GDP-bound inactive state. Reduces interaction with chdp-1 compared to the V-12 mutant." evidence="12 17">
    <original>T</original>
    <variation>N</variation>
    <location>
        <position position="17"/>
    </location>
</feature>
<feature type="mutagenesis site" description="In xd33; defects in connections between BDU and PLM neurons. Reduce membrane protrusion." evidence="12">
    <original>S</original>
    <variation>F</variation>
    <location>
        <position position="22"/>
    </location>
</feature>
<feature type="mutagenesis site" description="In n3246; in HSN neurons, severe reduction in mig-10 ventral enrichment and mild defect in axonal guidance but normal final migration to the ventral nerve cord. Dopaminergic neurodegeneration in 20% of animals in response to oxidative stress-induced by the neurotoxin 6-hydroxydopamine (6-OHDA). Dopaminergic neurodegeneration is partially suppressed in a ttr-33 (gt1983) mutant background in response to 6-OHDA. Defects in connections between BDU and PLM neurons. Reduced membrane protrusion." evidence="5 12 13">
    <original>G</original>
    <variation>R</variation>
    <location>
        <position position="60"/>
    </location>
</feature>
<feature type="mutagenesis site" description="May lock enzyme in its GTP-bound active state. Defect in distal tip cell (DTC) migration." evidence="7">
    <original>Q</original>
    <variation>L</variation>
    <location>
        <position position="61"/>
    </location>
</feature>
<feature type="mutagenesis site" description="In n1993; disrupts F-actin polarization in VD neuron growth cone. In VD neurons, increases growth cone filopodial protrusion, characterized by an accumulation of plus-end microtubule, and formation of ectopic axons in a mig-2 mu28 mutant background. Defects in connections between BDU and PLM neurons. Reduced membrane protrusion." evidence="10 12 14">
    <original>V</original>
    <variation>G</variation>
    <location>
        <position position="190"/>
    </location>
</feature>
<feature type="sequence conflict" description="In Ref. 1; AAA28140/AAA28141/CAA48506." evidence="18" ref="1">
    <original>L</original>
    <variation>V</variation>
    <location>
        <position position="177"/>
    </location>
</feature>
<gene>
    <name evidence="20" type="primary">ced-10</name>
    <name evidence="20" type="synonym">rac-1</name>
    <name evidence="20" type="ORF">C09G12.8</name>
</gene>
<protein>
    <recommendedName>
        <fullName>Ras-related protein ced-10</fullName>
    </recommendedName>
    <alternativeName>
        <fullName>CErac1</fullName>
    </alternativeName>
    <alternativeName>
        <fullName>Cell death protein 10</fullName>
    </alternativeName>
    <alternativeName>
        <fullName>Cell-corpse engulfment protein ced-10</fullName>
    </alternativeName>
    <alternativeName>
        <fullName>Ras-related protein rac-1</fullName>
    </alternativeName>
</protein>
<accession>Q03206</accession>
<accession>O44463</accession>
<accession>O44464</accession>
<comment type="function">
    <text evidence="3 4 5 6 7 8 9 10 11 13 14 16">Required in engulfing to control the phagocytosis of apoptotic cell corpses (PubMed:10707082, PubMed:20126385). Required in embryonic development for the correct positioning and orientation of the mitotic spindles and division planes in blastomere cells (PubMed:20126385). Involved in hypodermal cell fusion, together with pak-1 and cdc-42, leading to embryonic body elongation, which involves dramatic cytoskeletal reorganization (PubMed:8824291). ced-2 and ced-5 function to activate ced-10 in a GTPase signaling pathway that controls the polarized extension of cell surfaces (PubMed:10707082). Plays a redundant role with mig-2 in dorsal axonal guidance in ventral cord commissural motoneurons and in P neuroblast migration. May regulate these 2 processes by activating pak-1 and/or max-2 (PubMed:17050621). Plays a role, probably via mig-10, in orientating axonal growth of HSN and AVM neurons in response to guidance cues such as slt-1. Regulates mig-10 asymmetric distribution in HSN neurons (PubMed:18499456). During the dorso-ventral axonal guidance and outgrowth of VD neurons, required together with mig-2 to inhibit growth cone filopodial protrusion mediated by netrin guidance cue unc-6 and its receptors unc-5 and unc-40 (PubMed:25371370, PubMed:30045855). Specifically, regulates growth cone filopodial protrusion polarity, and thus migration, by promoting F-actin polarization and, together with mig-2, by restricting plus-end microtubule accumulation in the growth cone (PubMed:30045855). Plays a role in protecting dopaminergic neurons from oxidative stress-induced degeneration (PubMed:29346382). During gonad morphogenesis, plays a role in distal tip cell (DTC)-mediated guidance of gonad elongation, probably by activating max-2 (PubMed:19023419, PubMed:19797046). Furthermore, plays a role in distal tip cell polarity and migration by negatively regulating the unc-6/Netrin receptor unc-5 (PubMed:26292279). May be involved in signal transduction during cell migration (PubMed:10707082). May be involved in the positioning of ray 1, the most anterior ray sensilium, in the male tail (PubMed:24004945).</text>
</comment>
<comment type="subunit">
    <text evidence="5 12 16">Interacts (GTP-bound form) with pak-1 (PubMed:8824291). May interact (GTP-bound form) with mig-10 (via Ras-associating and PH domains) (PubMed:18499456). Interacts (GTP-bound form) with chdp-1 (via CH domain); the interaction facilitates the localization of ced-10 to the cell cortex (PubMed:27415421).</text>
</comment>
<comment type="subcellular location">
    <subcellularLocation>
        <location evidence="12 16">Cell membrane</location>
        <topology evidence="18">Lipid-anchor</topology>
        <orientation evidence="12 16">Cytoplasmic side</orientation>
    </subcellularLocation>
    <text evidence="16">Co-localizes with pak-1 and cdc-42 at hypodermal cell boundaries during embryo elongation.</text>
</comment>
<comment type="alternative products">
    <event type="alternative splicing"/>
    <isoform>
        <id>Q03206-1</id>
        <name evidence="20">b</name>
        <sequence type="displayed"/>
    </isoform>
    <isoform>
        <id>Q03206-2</id>
        <name evidence="19">a</name>
        <sequence type="described" ref="VSP_005711"/>
    </isoform>
</comment>
<comment type="tissue specificity">
    <text evidence="16">Colocalizes with pak-1 to hypodermal cell boundaries during embryo elongation throughout the second phase of embryogenesis.</text>
</comment>
<comment type="developmental stage">
    <text evidence="15">Most abundant at embryonic stage, its expression decreases dramatically during development.</text>
</comment>
<comment type="disruption phenotype">
    <text evidence="8 11">In the second generation, there is defective mitotic spindle orientation in the EMS and ABar blastomeres which results in disrupted left-right asymmetry and failure to undergo morphogenesis (PubMed:20126385). Due to defective apoptotic cell clearance, embryos accumulate apoptotic cell corpses (PubMed:20126385). Distal tip cell migratory defects (PubMed:26292279). Double knockout with unc-5 RNAi suppresses the distal tip cell migratory defect in the ced-10 single mutant (PubMed:26292279).</text>
</comment>
<comment type="similarity">
    <text evidence="18">Belongs to the small GTPase superfamily. Rho family.</text>
</comment>
<organism>
    <name type="scientific">Caenorhabditis elegans</name>
    <dbReference type="NCBI Taxonomy" id="6239"/>
    <lineage>
        <taxon>Eukaryota</taxon>
        <taxon>Metazoa</taxon>
        <taxon>Ecdysozoa</taxon>
        <taxon>Nematoda</taxon>
        <taxon>Chromadorea</taxon>
        <taxon>Rhabditida</taxon>
        <taxon>Rhabditina</taxon>
        <taxon>Rhabditomorpha</taxon>
        <taxon>Rhabditoidea</taxon>
        <taxon>Rhabditidae</taxon>
        <taxon>Peloderinae</taxon>
        <taxon>Caenorhabditis</taxon>
    </lineage>
</organism>
<keyword id="KW-0025">Alternative splicing</keyword>
<keyword id="KW-0053">Apoptosis</keyword>
<keyword id="KW-1003">Cell membrane</keyword>
<keyword id="KW-0217">Developmental protein</keyword>
<keyword id="KW-0342">GTP-binding</keyword>
<keyword id="KW-0449">Lipoprotein</keyword>
<keyword id="KW-0472">Membrane</keyword>
<keyword id="KW-0488">Methylation</keyword>
<keyword id="KW-0524">Neurogenesis</keyword>
<keyword id="KW-0547">Nucleotide-binding</keyword>
<keyword id="KW-0581">Phagocytosis</keyword>
<keyword id="KW-0636">Prenylation</keyword>
<keyword id="KW-1185">Reference proteome</keyword>
<evidence type="ECO:0000250" key="1"/>
<evidence type="ECO:0000255" key="2"/>
<evidence type="ECO:0000269" key="3">
    <source>
    </source>
</evidence>
<evidence type="ECO:0000269" key="4">
    <source>
    </source>
</evidence>
<evidence type="ECO:0000269" key="5">
    <source>
    </source>
</evidence>
<evidence type="ECO:0000269" key="6">
    <source>
    </source>
</evidence>
<evidence type="ECO:0000269" key="7">
    <source>
    </source>
</evidence>
<evidence type="ECO:0000269" key="8">
    <source>
    </source>
</evidence>
<evidence type="ECO:0000269" key="9">
    <source>
    </source>
</evidence>
<evidence type="ECO:0000269" key="10">
    <source>
    </source>
</evidence>
<evidence type="ECO:0000269" key="11">
    <source>
    </source>
</evidence>
<evidence type="ECO:0000269" key="12">
    <source>
    </source>
</evidence>
<evidence type="ECO:0000269" key="13">
    <source>
    </source>
</evidence>
<evidence type="ECO:0000269" key="14">
    <source>
    </source>
</evidence>
<evidence type="ECO:0000269" key="15">
    <source>
    </source>
</evidence>
<evidence type="ECO:0000269" key="16">
    <source>
    </source>
</evidence>
<evidence type="ECO:0000303" key="17">
    <source>
    </source>
</evidence>
<evidence type="ECO:0000305" key="18"/>
<evidence type="ECO:0000312" key="19">
    <source>
        <dbReference type="WormBase" id="C09G12.8a"/>
    </source>
</evidence>
<evidence type="ECO:0000312" key="20">
    <source>
        <dbReference type="WormBase" id="C09G12.8b"/>
    </source>
</evidence>
<dbReference type="EMBL" id="L03711">
    <property type="protein sequence ID" value="AAA28140.1"/>
    <property type="molecule type" value="mRNA"/>
</dbReference>
<dbReference type="EMBL" id="L04287">
    <property type="protein sequence ID" value="AAA28141.1"/>
    <property type="molecule type" value="mRNA"/>
</dbReference>
<dbReference type="EMBL" id="X68492">
    <property type="protein sequence ID" value="CAA48506.1"/>
    <property type="molecule type" value="mRNA"/>
</dbReference>
<dbReference type="EMBL" id="AF226867">
    <property type="protein sequence ID" value="AAF33846.1"/>
    <property type="molecule type" value="mRNA"/>
</dbReference>
<dbReference type="EMBL" id="BX284604">
    <property type="protein sequence ID" value="CCD64025.1"/>
    <property type="molecule type" value="Genomic_DNA"/>
</dbReference>
<dbReference type="EMBL" id="BX284604">
    <property type="protein sequence ID" value="CCD64024.1"/>
    <property type="molecule type" value="Genomic_DNA"/>
</dbReference>
<dbReference type="PIR" id="A45324">
    <property type="entry name" value="A45324"/>
</dbReference>
<dbReference type="PIR" id="G88650">
    <property type="entry name" value="G88650"/>
</dbReference>
<dbReference type="RefSeq" id="NP_500362.3">
    <molecule id="Q03206-2"/>
    <property type="nucleotide sequence ID" value="NM_067961.4"/>
</dbReference>
<dbReference type="RefSeq" id="NP_500363.1">
    <molecule id="Q03206-1"/>
    <property type="nucleotide sequence ID" value="NM_067962.7"/>
</dbReference>
<dbReference type="SMR" id="Q03206"/>
<dbReference type="BioGRID" id="42251">
    <property type="interactions" value="27"/>
</dbReference>
<dbReference type="FunCoup" id="Q03206">
    <property type="interactions" value="1769"/>
</dbReference>
<dbReference type="IntAct" id="Q03206">
    <property type="interactions" value="1"/>
</dbReference>
<dbReference type="STRING" id="6239.C09G12.8b.1"/>
<dbReference type="PaxDb" id="6239-C09G12.8b"/>
<dbReference type="PeptideAtlas" id="Q03206"/>
<dbReference type="EnsemblMetazoa" id="C09G12.8a.1">
    <molecule id="Q03206-2"/>
    <property type="protein sequence ID" value="C09G12.8a.1"/>
    <property type="gene ID" value="WBGene00000424"/>
</dbReference>
<dbReference type="EnsemblMetazoa" id="C09G12.8b.1">
    <molecule id="Q03206-1"/>
    <property type="protein sequence ID" value="C09G12.8b.1"/>
    <property type="gene ID" value="WBGene00000424"/>
</dbReference>
<dbReference type="GeneID" id="177111"/>
<dbReference type="KEGG" id="cel:CELE_C09G12.8"/>
<dbReference type="UCSC" id="C09G12.8b">
    <molecule id="Q03206-1"/>
    <property type="organism name" value="c. elegans"/>
</dbReference>
<dbReference type="AGR" id="WB:WBGene00000424"/>
<dbReference type="CTD" id="177111"/>
<dbReference type="WormBase" id="C09G12.8a">
    <molecule id="Q03206-2"/>
    <property type="protein sequence ID" value="CE16832"/>
    <property type="gene ID" value="WBGene00000424"/>
    <property type="gene designation" value="ced-10"/>
</dbReference>
<dbReference type="WormBase" id="C09G12.8b">
    <molecule id="Q03206-1"/>
    <property type="protein sequence ID" value="CE16833"/>
    <property type="gene ID" value="WBGene00000424"/>
    <property type="gene designation" value="ced-10"/>
</dbReference>
<dbReference type="eggNOG" id="KOG0393">
    <property type="taxonomic scope" value="Eukaryota"/>
</dbReference>
<dbReference type="GeneTree" id="ENSGT00940000155205"/>
<dbReference type="HOGENOM" id="CLU_041217_21_3_1"/>
<dbReference type="InParanoid" id="Q03206"/>
<dbReference type="OMA" id="PFCDVFL"/>
<dbReference type="OrthoDB" id="8830751at2759"/>
<dbReference type="PhylomeDB" id="Q03206"/>
<dbReference type="Reactome" id="R-CEL-114604">
    <property type="pathway name" value="GPVI-mediated activation cascade"/>
</dbReference>
<dbReference type="Reactome" id="R-CEL-1257604">
    <property type="pathway name" value="PIP3 activates AKT signaling"/>
</dbReference>
<dbReference type="Reactome" id="R-CEL-1433557">
    <property type="pathway name" value="Signaling by SCF-KIT"/>
</dbReference>
<dbReference type="Reactome" id="R-CEL-193648">
    <property type="pathway name" value="NRAGE signals death through JNK"/>
</dbReference>
<dbReference type="Reactome" id="R-CEL-2029482">
    <property type="pathway name" value="Regulation of actin dynamics for phagocytic cup formation"/>
</dbReference>
<dbReference type="Reactome" id="R-CEL-389359">
    <property type="pathway name" value="CD28 dependent Vav1 pathway"/>
</dbReference>
<dbReference type="Reactome" id="R-CEL-3928662">
    <property type="pathway name" value="EPHB-mediated forward signaling"/>
</dbReference>
<dbReference type="Reactome" id="R-CEL-3928664">
    <property type="pathway name" value="Ephrin signaling"/>
</dbReference>
<dbReference type="Reactome" id="R-CEL-3928665">
    <property type="pathway name" value="EPH-ephrin mediated repulsion of cells"/>
</dbReference>
<dbReference type="Reactome" id="R-CEL-399954">
    <property type="pathway name" value="Sema3A PAK dependent Axon repulsion"/>
</dbReference>
<dbReference type="Reactome" id="R-CEL-4086400">
    <property type="pathway name" value="PCP/CE pathway"/>
</dbReference>
<dbReference type="Reactome" id="R-CEL-416550">
    <property type="pathway name" value="Sema4D mediated inhibition of cell attachment and migration"/>
</dbReference>
<dbReference type="Reactome" id="R-CEL-418885">
    <property type="pathway name" value="DCC mediated attractive signaling"/>
</dbReference>
<dbReference type="Reactome" id="R-CEL-4420097">
    <property type="pathway name" value="VEGFA-VEGFR2 Pathway"/>
</dbReference>
<dbReference type="Reactome" id="R-CEL-445144">
    <property type="pathway name" value="Signal transduction by L1"/>
</dbReference>
<dbReference type="Reactome" id="R-CEL-5218920">
    <property type="pathway name" value="VEGFR2 mediated vascular permeability"/>
</dbReference>
<dbReference type="Reactome" id="R-CEL-5625740">
    <property type="pathway name" value="RHO GTPases activate PKNs"/>
</dbReference>
<dbReference type="Reactome" id="R-CEL-5626467">
    <property type="pathway name" value="RHO GTPases activate IQGAPs"/>
</dbReference>
<dbReference type="Reactome" id="R-CEL-5627123">
    <property type="pathway name" value="RHO GTPases activate PAKs"/>
</dbReference>
<dbReference type="Reactome" id="R-CEL-5663213">
    <property type="pathway name" value="RHO GTPases Activate WASPs and WAVEs"/>
</dbReference>
<dbReference type="Reactome" id="R-CEL-5663220">
    <property type="pathway name" value="RHO GTPases Activate Formins"/>
</dbReference>
<dbReference type="Reactome" id="R-CEL-5687128">
    <property type="pathway name" value="MAPK6/MAPK4 signaling"/>
</dbReference>
<dbReference type="Reactome" id="R-CEL-6798695">
    <property type="pathway name" value="Neutrophil degranulation"/>
</dbReference>
<dbReference type="Reactome" id="R-CEL-6811558">
    <property type="pathway name" value="PI5P, PP2A and IER3 Regulate PI3K/AKT Signaling"/>
</dbReference>
<dbReference type="Reactome" id="R-CEL-8849471">
    <property type="pathway name" value="PTK6 Regulates RHO GTPases, RAS GTPase and MAP kinases"/>
</dbReference>
<dbReference type="Reactome" id="R-CEL-8875555">
    <property type="pathway name" value="MET activates RAP1 and RAC1"/>
</dbReference>
<dbReference type="Reactome" id="R-CEL-9013149">
    <property type="pathway name" value="RAC1 GTPase cycle"/>
</dbReference>
<dbReference type="Reactome" id="R-CEL-9013404">
    <property type="pathway name" value="RAC2 GTPase cycle"/>
</dbReference>
<dbReference type="Reactome" id="R-CEL-9013407">
    <property type="pathway name" value="RHOH GTPase cycle"/>
</dbReference>
<dbReference type="Reactome" id="R-CEL-9013408">
    <property type="pathway name" value="RHOG GTPase cycle"/>
</dbReference>
<dbReference type="Reactome" id="R-CEL-9013423">
    <property type="pathway name" value="RAC3 GTPase cycle"/>
</dbReference>
<dbReference type="Reactome" id="R-CEL-9748787">
    <property type="pathway name" value="Azathioprine ADME"/>
</dbReference>
<dbReference type="Reactome" id="R-CEL-983231">
    <property type="pathway name" value="Factors involved in megakaryocyte development and platelet production"/>
</dbReference>
<dbReference type="SignaLink" id="Q03206"/>
<dbReference type="PRO" id="PR:Q03206"/>
<dbReference type="Proteomes" id="UP000001940">
    <property type="component" value="Chromosome IV"/>
</dbReference>
<dbReference type="Bgee" id="WBGene00000424">
    <property type="expression patterns" value="Expressed in pharyngeal muscle cell (C elegans) and 4 other cell types or tissues"/>
</dbReference>
<dbReference type="GO" id="GO:0042995">
    <property type="term" value="C:cell projection"/>
    <property type="evidence" value="ECO:0000318"/>
    <property type="project" value="GO_Central"/>
</dbReference>
<dbReference type="GO" id="GO:0009898">
    <property type="term" value="C:cytoplasmic side of plasma membrane"/>
    <property type="evidence" value="ECO:0000314"/>
    <property type="project" value="WormBase"/>
</dbReference>
<dbReference type="GO" id="GO:0031410">
    <property type="term" value="C:cytoplasmic vesicle"/>
    <property type="evidence" value="ECO:0000314"/>
    <property type="project" value="WormBase"/>
</dbReference>
<dbReference type="GO" id="GO:0005856">
    <property type="term" value="C:cytoskeleton"/>
    <property type="evidence" value="ECO:0000318"/>
    <property type="project" value="GO_Central"/>
</dbReference>
<dbReference type="GO" id="GO:0005829">
    <property type="term" value="C:cytosol"/>
    <property type="evidence" value="ECO:0000304"/>
    <property type="project" value="Reactome"/>
</dbReference>
<dbReference type="GO" id="GO:0016020">
    <property type="term" value="C:membrane"/>
    <property type="evidence" value="ECO:0000314"/>
    <property type="project" value="UniProtKB"/>
</dbReference>
<dbReference type="GO" id="GO:0043025">
    <property type="term" value="C:neuronal cell body"/>
    <property type="evidence" value="ECO:0000314"/>
    <property type="project" value="WormBase"/>
</dbReference>
<dbReference type="GO" id="GO:0005886">
    <property type="term" value="C:plasma membrane"/>
    <property type="evidence" value="ECO:0000314"/>
    <property type="project" value="WormBase"/>
</dbReference>
<dbReference type="GO" id="GO:0005525">
    <property type="term" value="F:GTP binding"/>
    <property type="evidence" value="ECO:0000314"/>
    <property type="project" value="UniProtKB"/>
</dbReference>
<dbReference type="GO" id="GO:0003924">
    <property type="term" value="F:GTPase activity"/>
    <property type="evidence" value="ECO:0000314"/>
    <property type="project" value="UniProtKB"/>
</dbReference>
<dbReference type="GO" id="GO:0019901">
    <property type="term" value="F:protein kinase binding"/>
    <property type="evidence" value="ECO:0000318"/>
    <property type="project" value="GO_Central"/>
</dbReference>
<dbReference type="GO" id="GO:0007015">
    <property type="term" value="P:actin filament organization"/>
    <property type="evidence" value="ECO:0000318"/>
    <property type="project" value="GO_Central"/>
</dbReference>
<dbReference type="GO" id="GO:0006915">
    <property type="term" value="P:apoptotic process"/>
    <property type="evidence" value="ECO:0007669"/>
    <property type="project" value="UniProtKB-KW"/>
</dbReference>
<dbReference type="GO" id="GO:0048846">
    <property type="term" value="P:axon extension involved in axon guidance"/>
    <property type="evidence" value="ECO:0000316"/>
    <property type="project" value="WormBase"/>
</dbReference>
<dbReference type="GO" id="GO:0031103">
    <property type="term" value="P:axon regeneration"/>
    <property type="evidence" value="ECO:0000315"/>
    <property type="project" value="WormBase"/>
</dbReference>
<dbReference type="GO" id="GO:0010171">
    <property type="term" value="P:body morphogenesis"/>
    <property type="evidence" value="ECO:0000316"/>
    <property type="project" value="WormBase"/>
</dbReference>
<dbReference type="GO" id="GO:0060326">
    <property type="term" value="P:cell chemotaxis"/>
    <property type="evidence" value="ECO:0000318"/>
    <property type="project" value="GO_Central"/>
</dbReference>
<dbReference type="GO" id="GO:0016477">
    <property type="term" value="P:cell migration"/>
    <property type="evidence" value="ECO:0000315"/>
    <property type="project" value="WormBase"/>
</dbReference>
<dbReference type="GO" id="GO:0030031">
    <property type="term" value="P:cell projection assembly"/>
    <property type="evidence" value="ECO:0000318"/>
    <property type="project" value="GO_Central"/>
</dbReference>
<dbReference type="GO" id="GO:0061643">
    <property type="term" value="P:chemorepulsion of axon"/>
    <property type="evidence" value="ECO:0000316"/>
    <property type="project" value="UniProtKB"/>
</dbReference>
<dbReference type="GO" id="GO:0030865">
    <property type="term" value="P:cortical cytoskeleton organization"/>
    <property type="evidence" value="ECO:0000318"/>
    <property type="project" value="GO_Central"/>
</dbReference>
<dbReference type="GO" id="GO:0097628">
    <property type="term" value="P:distal tip cell migration"/>
    <property type="evidence" value="ECO:0000315"/>
    <property type="project" value="WormBase"/>
</dbReference>
<dbReference type="GO" id="GO:0033563">
    <property type="term" value="P:dorsal/ventral axon guidance"/>
    <property type="evidence" value="ECO:0000316"/>
    <property type="project" value="WormBase"/>
</dbReference>
<dbReference type="GO" id="GO:0010172">
    <property type="term" value="P:embryonic body morphogenesis"/>
    <property type="evidence" value="ECO:0000315"/>
    <property type="project" value="WormBase"/>
</dbReference>
<dbReference type="GO" id="GO:0048598">
    <property type="term" value="P:embryonic morphogenesis"/>
    <property type="evidence" value="ECO:0000315"/>
    <property type="project" value="UniProtKB"/>
</dbReference>
<dbReference type="GO" id="GO:0043652">
    <property type="term" value="P:engulfment of apoptotic cell"/>
    <property type="evidence" value="ECO:0000315"/>
    <property type="project" value="WormBase"/>
</dbReference>
<dbReference type="GO" id="GO:0000132">
    <property type="term" value="P:establishment of mitotic spindle orientation"/>
    <property type="evidence" value="ECO:0000315"/>
    <property type="project" value="UniProtKB"/>
</dbReference>
<dbReference type="GO" id="GO:0030950">
    <property type="term" value="P:establishment or maintenance of actin cytoskeleton polarity"/>
    <property type="evidence" value="ECO:0000315"/>
    <property type="project" value="UniProtKB"/>
</dbReference>
<dbReference type="GO" id="GO:0007163">
    <property type="term" value="P:establishment or maintenance of cell polarity"/>
    <property type="evidence" value="ECO:0000318"/>
    <property type="project" value="GO_Central"/>
</dbReference>
<dbReference type="GO" id="GO:0007369">
    <property type="term" value="P:gastrulation"/>
    <property type="evidence" value="ECO:0000315"/>
    <property type="project" value="WormBase"/>
</dbReference>
<dbReference type="GO" id="GO:0070986">
    <property type="term" value="P:left/right axis specification"/>
    <property type="evidence" value="ECO:0000315"/>
    <property type="project" value="UniProtKB"/>
</dbReference>
<dbReference type="GO" id="GO:0008045">
    <property type="term" value="P:motor neuron axon guidance"/>
    <property type="evidence" value="ECO:0000316"/>
    <property type="project" value="UniProtKB"/>
</dbReference>
<dbReference type="GO" id="GO:0031115">
    <property type="term" value="P:negative regulation of microtubule polymerization"/>
    <property type="evidence" value="ECO:0000316"/>
    <property type="project" value="UniProtKB"/>
</dbReference>
<dbReference type="GO" id="GO:0002119">
    <property type="term" value="P:nematode larval development"/>
    <property type="evidence" value="ECO:0000316"/>
    <property type="project" value="WormBase"/>
</dbReference>
<dbReference type="GO" id="GO:0045138">
    <property type="term" value="P:nematode male tail tip morphogenesis"/>
    <property type="evidence" value="ECO:0000316"/>
    <property type="project" value="WormBase"/>
</dbReference>
<dbReference type="GO" id="GO:0038007">
    <property type="term" value="P:netrin-activated signaling pathway"/>
    <property type="evidence" value="ECO:0000315"/>
    <property type="project" value="UniProtKB"/>
</dbReference>
<dbReference type="GO" id="GO:0001764">
    <property type="term" value="P:neuron migration"/>
    <property type="evidence" value="ECO:0000316"/>
    <property type="project" value="WormBase"/>
</dbReference>
<dbReference type="GO" id="GO:0048812">
    <property type="term" value="P:neuron projection morphogenesis"/>
    <property type="evidence" value="ECO:0000316"/>
    <property type="project" value="WormBase"/>
</dbReference>
<dbReference type="GO" id="GO:1903356">
    <property type="term" value="P:positive regulation of distal tip cell migration"/>
    <property type="evidence" value="ECO:0000315"/>
    <property type="project" value="UniProtKB"/>
</dbReference>
<dbReference type="GO" id="GO:1901076">
    <property type="term" value="P:positive regulation of engulfment of apoptotic cell"/>
    <property type="evidence" value="ECO:0000315"/>
    <property type="project" value="UniProtKB"/>
</dbReference>
<dbReference type="GO" id="GO:0016601">
    <property type="term" value="P:Rac protein signal transduction"/>
    <property type="evidence" value="ECO:0000318"/>
    <property type="project" value="GO_Central"/>
</dbReference>
<dbReference type="GO" id="GO:0032956">
    <property type="term" value="P:regulation of actin cytoskeleton organization"/>
    <property type="evidence" value="ECO:0000318"/>
    <property type="project" value="GO_Central"/>
</dbReference>
<dbReference type="GO" id="GO:0030334">
    <property type="term" value="P:regulation of cell migration"/>
    <property type="evidence" value="ECO:0000314"/>
    <property type="project" value="UniProtKB"/>
</dbReference>
<dbReference type="GO" id="GO:0008360">
    <property type="term" value="P:regulation of cell shape"/>
    <property type="evidence" value="ECO:0000318"/>
    <property type="project" value="GO_Central"/>
</dbReference>
<dbReference type="GO" id="GO:1905815">
    <property type="term" value="P:regulation of dorsal/ventral axon guidance"/>
    <property type="evidence" value="ECO:0000315"/>
    <property type="project" value="UniProtKB"/>
</dbReference>
<dbReference type="GO" id="GO:0050764">
    <property type="term" value="P:regulation of phagocytosis"/>
    <property type="evidence" value="ECO:0000315"/>
    <property type="project" value="UniProtKB"/>
</dbReference>
<dbReference type="GO" id="GO:0032228">
    <property type="term" value="P:regulation of synaptic transmission, GABAergic"/>
    <property type="evidence" value="ECO:0000315"/>
    <property type="project" value="UniProtKB"/>
</dbReference>
<dbReference type="GO" id="GO:0007264">
    <property type="term" value="P:small GTPase-mediated signal transduction"/>
    <property type="evidence" value="ECO:0000314"/>
    <property type="project" value="UniProtKB"/>
</dbReference>
<dbReference type="CDD" id="cd01871">
    <property type="entry name" value="Rac1_like"/>
    <property type="match status" value="1"/>
</dbReference>
<dbReference type="FunFam" id="3.40.50.300:FF:000088">
    <property type="entry name" value="Ras-related C3 botulinum toxin substrate 1"/>
    <property type="match status" value="1"/>
</dbReference>
<dbReference type="Gene3D" id="3.40.50.300">
    <property type="entry name" value="P-loop containing nucleotide triphosphate hydrolases"/>
    <property type="match status" value="1"/>
</dbReference>
<dbReference type="InterPro" id="IPR027417">
    <property type="entry name" value="P-loop_NTPase"/>
</dbReference>
<dbReference type="InterPro" id="IPR005225">
    <property type="entry name" value="Small_GTP-bd"/>
</dbReference>
<dbReference type="InterPro" id="IPR001806">
    <property type="entry name" value="Small_GTPase"/>
</dbReference>
<dbReference type="InterPro" id="IPR003578">
    <property type="entry name" value="Small_GTPase_Rho"/>
</dbReference>
<dbReference type="NCBIfam" id="TIGR00231">
    <property type="entry name" value="small_GTP"/>
    <property type="match status" value="1"/>
</dbReference>
<dbReference type="PANTHER" id="PTHR24072">
    <property type="entry name" value="RHO FAMILY GTPASE"/>
    <property type="match status" value="1"/>
</dbReference>
<dbReference type="Pfam" id="PF00071">
    <property type="entry name" value="Ras"/>
    <property type="match status" value="1"/>
</dbReference>
<dbReference type="PRINTS" id="PR00449">
    <property type="entry name" value="RASTRNSFRMNG"/>
</dbReference>
<dbReference type="SMART" id="SM00175">
    <property type="entry name" value="RAB"/>
    <property type="match status" value="1"/>
</dbReference>
<dbReference type="SMART" id="SM00176">
    <property type="entry name" value="RAN"/>
    <property type="match status" value="1"/>
</dbReference>
<dbReference type="SMART" id="SM00173">
    <property type="entry name" value="RAS"/>
    <property type="match status" value="1"/>
</dbReference>
<dbReference type="SMART" id="SM00174">
    <property type="entry name" value="RHO"/>
    <property type="match status" value="1"/>
</dbReference>
<dbReference type="SUPFAM" id="SSF52540">
    <property type="entry name" value="P-loop containing nucleoside triphosphate hydrolases"/>
    <property type="match status" value="1"/>
</dbReference>
<dbReference type="PROSITE" id="PS51420">
    <property type="entry name" value="RHO"/>
    <property type="match status" value="1"/>
</dbReference>
<reference key="1">
    <citation type="journal article" date="1993" name="J. Biol. Chem.">
        <title>A new member of the ras superfamily, the rac1 homologue from Caenorhabditis elegans. Cloning and sequence analysis of cDNA, pattern of developmental expression, and biochemical characterization of the protein.</title>
        <authorList>
            <person name="Chen W."/>
            <person name="Lim H.H."/>
            <person name="Lim L."/>
        </authorList>
    </citation>
    <scope>NUCLEOTIDE SEQUENCE [MRNA] (ISOFORM B)</scope>
    <scope>DEVELOPMENTAL STAGE</scope>
    <source>
        <strain>Bristol N2</strain>
    </source>
</reference>
<reference key="2">
    <citation type="journal article" date="2000" name="Nat. Cell Biol.">
        <title>CED-2/CrkII and CED-10/Rac control phagocytosis and cell migration in Caenorhabditis elegans.</title>
        <authorList>
            <person name="Reddien P.W."/>
            <person name="Horvitz H.R."/>
        </authorList>
    </citation>
    <scope>NUCLEOTIDE SEQUENCE [MRNA] (ISOFORM B)</scope>
    <scope>FUNCTION</scope>
</reference>
<reference key="3">
    <citation type="journal article" date="1998" name="Science">
        <title>Genome sequence of the nematode C. elegans: a platform for investigating biology.</title>
        <authorList>
            <consortium name="The C. elegans sequencing consortium"/>
        </authorList>
    </citation>
    <scope>NUCLEOTIDE SEQUENCE [LARGE SCALE GENOMIC DNA]</scope>
    <source>
        <strain>Bristol N2</strain>
    </source>
</reference>
<reference key="4">
    <citation type="journal article" date="1996" name="J. Biol. Chem.">
        <title>The Caenorhabditis elegans p21-activated kinase (CePAK) colocalizes with CeRac1 and CDC42Ce at hypodermal cell boundaries during embryo elongation.</title>
        <authorList>
            <person name="Chen W."/>
            <person name="Chen S."/>
            <person name="Yap S.F."/>
            <person name="Lim L."/>
        </authorList>
    </citation>
    <scope>FUNCTION</scope>
    <scope>INTERACTION WITH PAK-1</scope>
    <scope>SUBCELLULAR LOCATION</scope>
    <scope>TISSUE SPECIFICITY</scope>
    <source>
        <strain>Bristol N2</strain>
    </source>
</reference>
<reference key="5">
    <citation type="journal article" date="2006" name="Development">
        <title>The Caenorhabditis elegans P21-activated kinases are differentially required for UNC-6/netrin-mediated commissural motor axon guidance.</title>
        <authorList>
            <person name="Lucanic M."/>
            <person name="Kiley M."/>
            <person name="Ashcroft N."/>
            <person name="L'Etoile N."/>
            <person name="Cheng H.J."/>
        </authorList>
    </citation>
    <scope>FUNCTION</scope>
</reference>
<reference key="6">
    <citation type="journal article" date="2008" name="Curr. Biol.">
        <title>CED-10/Rac1 mediates axon guidance by regulating the asymmetric distribution of MIG-10/lamellipodin.</title>
        <authorList>
            <person name="Quinn C.C."/>
            <person name="Pfeil D.S."/>
            <person name="Wadsworth W.G."/>
        </authorList>
    </citation>
    <scope>FUNCTION</scope>
    <scope>SUBCELLULAR LOCATION</scope>
    <scope>INTERACTION WITH MIG-10</scope>
    <scope>MUTAGENESIS OF GLY-12 AND GLY-60</scope>
</reference>
<reference key="7">
    <citation type="journal article" date="2008" name="PLoS Genet.">
        <title>A RAC/CDC-42-independent GIT/PIX/PAK signaling pathway mediates cell migration in C. elegans.</title>
        <authorList>
            <person name="Lucanic M."/>
            <person name="Cheng H.J."/>
        </authorList>
    </citation>
    <scope>FUNCTION</scope>
</reference>
<reference key="8">
    <citation type="journal article" date="2009" name="Genetics">
        <title>Pharmacogenetic analysis reveals a post-developmental role for Rac GTPases in Caenorhabditis elegans GABAergic neurotransmission.</title>
        <authorList>
            <person name="Locke C.J."/>
            <person name="Kautu B.B."/>
            <person name="Berry K.P."/>
            <person name="Lee S.K."/>
            <person name="Caldwell K.A."/>
            <person name="Caldwell G.A."/>
        </authorList>
    </citation>
    <scope>FUNCTION</scope>
    <scope>MUTAGENESIS OF GLN-61</scope>
</reference>
<reference key="9">
    <citation type="journal article" date="2010" name="PLoS Biol.">
        <title>The Wnt pathway controls cell death engulfment, spindle orientation, and migration through CED-10/Rac.</title>
        <authorList>
            <person name="Cabello J."/>
            <person name="Neukomm L.J."/>
            <person name="Guenesdogan U."/>
            <person name="Burkart K."/>
            <person name="Charette S.J."/>
            <person name="Lochnit G."/>
            <person name="Hengartner M.O."/>
            <person name="Schnabel R."/>
        </authorList>
    </citation>
    <scope>FUNCTION</scope>
    <scope>DISRUPTION PHENOTYPE</scope>
</reference>
<reference key="10">
    <citation type="journal article" date="2013" name="Development">
        <title>C. elegans PVF-1 inhibits permissive UNC-40 signalling through CED-10 GTPase to position the male ray 1 sensillum.</title>
        <authorList>
            <person name="Dalpe G."/>
            <person name="Tarsitano M."/>
            <person name="Persico M.G."/>
            <person name="Zheng H."/>
            <person name="Culotti J."/>
        </authorList>
    </citation>
    <scope>FUNCTION</scope>
</reference>
<reference key="11">
    <citation type="journal article" date="2014" name="Development">
        <title>The UNC-6/Netrin receptors UNC-40/DCC and UNC-5 inhibit growth cone filopodial protrusion via UNC-73/Trio, Rac-like GTPases and UNC-33/CRMP.</title>
        <authorList>
            <person name="Norris A.D."/>
            <person name="Sundararajan L."/>
            <person name="Morgan D.E."/>
            <person name="Roberts Z.J."/>
            <person name="Lundquist E.A."/>
        </authorList>
    </citation>
    <scope>FUNCTION</scope>
    <scope>MUTAGENESIS OF VAL-190</scope>
</reference>
<reference key="12">
    <citation type="journal article" date="2015" name="PLoS Genet.">
        <title>The Wnt frizzled receptor MOM-5 regulates the UNC-5 Netrin receptor through small GTPase-dependent signaling to determine the polarity of migrating cells.</title>
        <authorList>
            <person name="Levy-Strumpf N."/>
            <person name="Krizus M."/>
            <person name="Zheng H."/>
            <person name="Brown L."/>
            <person name="Culotti J.G."/>
        </authorList>
    </citation>
    <scope>FUNCTION</scope>
    <scope>DISRUPTION PHENOTYPE</scope>
</reference>
<reference key="13">
    <citation type="journal article" date="2016" name="PLoS Genet.">
        <title>The Calponin Family Member CHDP-1 Interacts with Rac/CED-10 to Promote Cell Protrusions.</title>
        <authorList>
            <person name="Guan L."/>
            <person name="Ma X."/>
            <person name="Zhang J."/>
            <person name="Liu J.J."/>
            <person name="Wang Y."/>
            <person name="Ding M."/>
        </authorList>
    </citation>
    <scope>INTERACTION WITH CHDP-1</scope>
    <scope>SUBCELLULAR LOCATION</scope>
    <scope>MUTAGENESIS OF GLY-12; THR-17; SER-22; GLY-60 AND VAL-190</scope>
</reference>
<reference key="14">
    <citation type="journal article" date="2018" name="Genetics">
        <title>Control of Growth Cone Polarity, Microtubule Accumulation, and Protrusion by UNC-6/Netrin and Its Receptors in Caenorhabditis elegans.</title>
        <authorList>
            <person name="Gujar M.R."/>
            <person name="Sundararajan L."/>
            <person name="Stricker A."/>
            <person name="Lundquist E.A."/>
        </authorList>
    </citation>
    <scope>FUNCTION</scope>
    <scope>MUTAGENESIS OF VAL-190</scope>
</reference>
<reference key="15">
    <citation type="journal article" date="2018" name="PLoS Genet.">
        <title>6-OHDA-induced dopaminergic neurodegeneration in Caenorhabditis elegans is promoted by the engulfment pathway and inhibited by the transthyretin-related protein TTR-33.</title>
        <authorList>
            <person name="Offenburger S.L."/>
            <person name="Ho X.Y."/>
            <person name="Tachie-Menson T."/>
            <person name="Coakley S."/>
            <person name="Hilliard M.A."/>
            <person name="Gartner A."/>
        </authorList>
    </citation>
    <scope>FUNCTION</scope>
    <scope>MUTAGENESIS OF GLY-60</scope>
</reference>
<proteinExistence type="evidence at protein level"/>
<sequence>MQAIKCVVVGDGAVGKTCLLISYTTNAFPGEYIPTVFDNYSANVMVDGRPINLGLWDTAGQEDYDRLRPLSYPQTDVFLVCFALNNPASFENVRAKWYPEVSHHCPNTPIILVGTKADLREDRDTVERLRERRLQPVSQTQGYVMAKEIKAVKYLECSALTQRGLKQVFDEAIRAVLTPPQRAKKSKCTVL</sequence>
<name>RAC1_CAEEL</name>